<name>PI51A_MOUSE</name>
<sequence>MASASSGPAAAGFSSLDAGAPAGTAAASGIKRATVSEGPSASVMPVKKIGHRSVDSSGETTYKKTTSSALKGAIQLGITHTVGSLSTKPERDVLMQDFYVVESIFFPSEGSNLTPAHHYNDFRFKTYAPVAFRYFRELFGIRPDDYLYSLCSEPLIELSNSGASGSLFYVSSDDEFIIKTVQHKEAEFLQKLLPGYYMNLNQNPRTLLPKFYGLYCVQAGGKNIRIVVMNNLLPRSVKMHMKYDLKGSTYKRRASQKEREKTLPTFKDLDFLQDIPDGLFLDADMYSALCKTLQRDCLVLQSFKIMDYSLLMSIHNMDHAQREPTSNDTQYSADTRRPAPQKALYSTAMESIQGEARRGGTVETEDHMGGIPARNNKGERLLLYIGIIDILQSYRFVKKLEHSWKALVHDGDTVSVHRPGFYAERFQRFMCNTVFKKIPLKPSPTKKFRSGPSFSRRSGPSGNSCTSQLMASGEHRAQVTTKAEVEPDVHLGRPDVLPQTPPLEEISEGSPVPGPSFSPVVGQPLQILNLSSTLEKLDVAESEFTH</sequence>
<feature type="chain" id="PRO_0000185457" description="Phosphatidylinositol 4-phosphate 5-kinase type-1 alpha">
    <location>
        <begin position="1"/>
        <end position="546"/>
    </location>
</feature>
<feature type="domain" description="PIPK" evidence="2">
    <location>
        <begin position="66"/>
        <end position="434"/>
    </location>
</feature>
<feature type="region of interest" description="Disordered" evidence="3">
    <location>
        <begin position="442"/>
        <end position="475"/>
    </location>
</feature>
<feature type="region of interest" description="Disordered" evidence="3">
    <location>
        <begin position="491"/>
        <end position="518"/>
    </location>
</feature>
<feature type="compositionally biased region" description="Low complexity" evidence="3">
    <location>
        <begin position="450"/>
        <end position="462"/>
    </location>
</feature>
<feature type="compositionally biased region" description="Low complexity" evidence="3">
    <location>
        <begin position="509"/>
        <end position="518"/>
    </location>
</feature>
<feature type="cross-link" description="Glycyl lysine isopeptide (Lys-Gly) (interchain with G-Cter in ubiquitin)" evidence="1">
    <location>
        <position position="88"/>
    </location>
</feature>
<feature type="splice variant" id="VSP_053437" description="In isoform 2 and isoform 3." evidence="11 12">
    <original>A</original>
    <variation>AA</variation>
    <location>
        <position position="27"/>
    </location>
</feature>
<feature type="splice variant" id="VSP_016009" description="In isoform 2." evidence="11">
    <location>
        <begin position="238"/>
        <end position="431"/>
    </location>
</feature>
<feature type="sequence conflict" description="In Ref. 2; BAE29943/BAE30850." evidence="15" ref="2">
    <original>P</original>
    <variation>R</variation>
    <location>
        <position position="107"/>
    </location>
</feature>
<feature type="sequence conflict" description="In Ref. 4; AAH03763." evidence="15" ref="4">
    <original>N</original>
    <variation>S</variation>
    <location>
        <position position="120"/>
    </location>
</feature>
<feature type="sequence conflict" description="In Ref. 1; BAA13031." evidence="15" ref="1">
    <original>E</original>
    <variation>D</variation>
    <location>
        <position position="258"/>
    </location>
</feature>
<dbReference type="EC" id="2.7.1.68" evidence="10"/>
<dbReference type="EMBL" id="D86177">
    <property type="protein sequence ID" value="BAA13031.1"/>
    <property type="molecule type" value="mRNA"/>
</dbReference>
<dbReference type="EMBL" id="AK150898">
    <property type="protein sequence ID" value="BAE29943.1"/>
    <property type="molecule type" value="mRNA"/>
</dbReference>
<dbReference type="EMBL" id="AK151984">
    <property type="protein sequence ID" value="BAE30850.1"/>
    <property type="molecule type" value="mRNA"/>
</dbReference>
<dbReference type="EMBL" id="AK158062">
    <property type="protein sequence ID" value="BAE34344.1"/>
    <property type="molecule type" value="mRNA"/>
</dbReference>
<dbReference type="EMBL" id="AC087062">
    <property type="status" value="NOT_ANNOTATED_CDS"/>
    <property type="molecule type" value="Genomic_DNA"/>
</dbReference>
<dbReference type="EMBL" id="AC131769">
    <property type="status" value="NOT_ANNOTATED_CDS"/>
    <property type="molecule type" value="Genomic_DNA"/>
</dbReference>
<dbReference type="EMBL" id="BC003763">
    <property type="protein sequence ID" value="AAH03763.1"/>
    <property type="molecule type" value="mRNA"/>
</dbReference>
<dbReference type="EMBL" id="BC031774">
    <property type="protein sequence ID" value="AAH31774.1"/>
    <property type="molecule type" value="mRNA"/>
</dbReference>
<dbReference type="CCDS" id="CCDS38542.1">
    <molecule id="P70182-1"/>
</dbReference>
<dbReference type="CCDS" id="CCDS79980.1">
    <molecule id="P70182-3"/>
</dbReference>
<dbReference type="RefSeq" id="NP_001280636.1">
    <molecule id="P70182-3"/>
    <property type="nucleotide sequence ID" value="NM_001293707.2"/>
</dbReference>
<dbReference type="RefSeq" id="NP_032873.2">
    <molecule id="P70182-1"/>
    <property type="nucleotide sequence ID" value="NM_008847.3"/>
</dbReference>
<dbReference type="SMR" id="P70182"/>
<dbReference type="BioGRID" id="202172">
    <property type="interactions" value="10"/>
</dbReference>
<dbReference type="FunCoup" id="P70182">
    <property type="interactions" value="3317"/>
</dbReference>
<dbReference type="STRING" id="10090.ENSMUSP00000102852"/>
<dbReference type="BindingDB" id="P70182"/>
<dbReference type="GlyGen" id="P70182">
    <property type="glycosylation" value="1 site, 1 N-linked glycan (1 site)"/>
</dbReference>
<dbReference type="iPTMnet" id="P70182"/>
<dbReference type="PhosphoSitePlus" id="P70182"/>
<dbReference type="jPOST" id="P70182"/>
<dbReference type="PaxDb" id="10090-ENSMUSP00000102852"/>
<dbReference type="PeptideAtlas" id="P70182"/>
<dbReference type="ProteomicsDB" id="289568">
    <molecule id="P70182-1"/>
</dbReference>
<dbReference type="ProteomicsDB" id="289569">
    <molecule id="P70182-2"/>
</dbReference>
<dbReference type="ProteomicsDB" id="289570">
    <molecule id="P70182-3"/>
</dbReference>
<dbReference type="Pumba" id="P70182"/>
<dbReference type="Antibodypedia" id="34058">
    <property type="antibodies" value="200 antibodies from 29 providers"/>
</dbReference>
<dbReference type="DNASU" id="18720"/>
<dbReference type="Ensembl" id="ENSMUST00000107233.9">
    <molecule id="P70182-3"/>
    <property type="protein sequence ID" value="ENSMUSP00000102852.3"/>
    <property type="gene ID" value="ENSMUSG00000028126.17"/>
</dbReference>
<dbReference type="Ensembl" id="ENSMUST00000107236.9">
    <molecule id="P70182-1"/>
    <property type="protein sequence ID" value="ENSMUSP00000102855.3"/>
    <property type="gene ID" value="ENSMUSG00000028126.17"/>
</dbReference>
<dbReference type="GeneID" id="18720"/>
<dbReference type="KEGG" id="mmu:18720"/>
<dbReference type="UCSC" id="uc008qhx.3">
    <molecule id="P70182-1"/>
    <property type="organism name" value="mouse"/>
</dbReference>
<dbReference type="UCSC" id="uc008qhy.3">
    <molecule id="P70182-3"/>
    <property type="organism name" value="mouse"/>
</dbReference>
<dbReference type="AGR" id="MGI:107929"/>
<dbReference type="CTD" id="8394"/>
<dbReference type="MGI" id="MGI:107929">
    <property type="gene designation" value="Pip5k1a"/>
</dbReference>
<dbReference type="VEuPathDB" id="HostDB:ENSMUSG00000028126"/>
<dbReference type="eggNOG" id="KOG0229">
    <property type="taxonomic scope" value="Eukaryota"/>
</dbReference>
<dbReference type="GeneTree" id="ENSGT00940000154703"/>
<dbReference type="InParanoid" id="P70182"/>
<dbReference type="OMA" id="CIFYADD"/>
<dbReference type="PhylomeDB" id="P70182"/>
<dbReference type="TreeFam" id="TF319618"/>
<dbReference type="BRENDA" id="2.7.1.68">
    <property type="organism ID" value="3474"/>
</dbReference>
<dbReference type="Reactome" id="R-MMU-1660499">
    <property type="pathway name" value="Synthesis of PIPs at the plasma membrane"/>
</dbReference>
<dbReference type="Reactome" id="R-MMU-6811558">
    <property type="pathway name" value="PI5P, PP2A and IER3 Regulate PI3K/AKT Signaling"/>
</dbReference>
<dbReference type="SABIO-RK" id="P70182"/>
<dbReference type="BioGRID-ORCS" id="18720">
    <property type="hits" value="7 hits in 79 CRISPR screens"/>
</dbReference>
<dbReference type="ChiTaRS" id="Pip5k1a">
    <property type="organism name" value="mouse"/>
</dbReference>
<dbReference type="PRO" id="PR:P70182"/>
<dbReference type="Proteomes" id="UP000000589">
    <property type="component" value="Chromosome 3"/>
</dbReference>
<dbReference type="RNAct" id="P70182">
    <property type="molecule type" value="protein"/>
</dbReference>
<dbReference type="Bgee" id="ENSMUSG00000028126">
    <property type="expression patterns" value="Expressed in placenta labyrinth and 281 other cell types or tissues"/>
</dbReference>
<dbReference type="ExpressionAtlas" id="P70182">
    <property type="expression patterns" value="baseline and differential"/>
</dbReference>
<dbReference type="GO" id="GO:0005829">
    <property type="term" value="C:cytosol"/>
    <property type="evidence" value="ECO:0000314"/>
    <property type="project" value="MGI"/>
</dbReference>
<dbReference type="GO" id="GO:0030027">
    <property type="term" value="C:lamellipodium"/>
    <property type="evidence" value="ECO:0007669"/>
    <property type="project" value="UniProtKB-SubCell"/>
</dbReference>
<dbReference type="GO" id="GO:0005847">
    <property type="term" value="C:mRNA cleavage and polyadenylation specificity factor complex"/>
    <property type="evidence" value="ECO:0007669"/>
    <property type="project" value="Ensembl"/>
</dbReference>
<dbReference type="GO" id="GO:0016607">
    <property type="term" value="C:nuclear speck"/>
    <property type="evidence" value="ECO:0000250"/>
    <property type="project" value="UniProtKB"/>
</dbReference>
<dbReference type="GO" id="GO:0005634">
    <property type="term" value="C:nucleus"/>
    <property type="evidence" value="ECO:0000314"/>
    <property type="project" value="MGI"/>
</dbReference>
<dbReference type="GO" id="GO:0005886">
    <property type="term" value="C:plasma membrane"/>
    <property type="evidence" value="ECO:0000250"/>
    <property type="project" value="UniProtKB"/>
</dbReference>
<dbReference type="GO" id="GO:0032587">
    <property type="term" value="C:ruffle membrane"/>
    <property type="evidence" value="ECO:0000314"/>
    <property type="project" value="MGI"/>
</dbReference>
<dbReference type="GO" id="GO:0016308">
    <property type="term" value="F:1-phosphatidylinositol-4-phosphate 5-kinase activity"/>
    <property type="evidence" value="ECO:0000314"/>
    <property type="project" value="MGI"/>
</dbReference>
<dbReference type="GO" id="GO:0005524">
    <property type="term" value="F:ATP binding"/>
    <property type="evidence" value="ECO:0007669"/>
    <property type="project" value="UniProtKB-KW"/>
</dbReference>
<dbReference type="GO" id="GO:0019900">
    <property type="term" value="F:kinase binding"/>
    <property type="evidence" value="ECO:0007669"/>
    <property type="project" value="Ensembl"/>
</dbReference>
<dbReference type="GO" id="GO:0030036">
    <property type="term" value="P:actin cytoskeleton organization"/>
    <property type="evidence" value="ECO:0000250"/>
    <property type="project" value="UniProtKB"/>
</dbReference>
<dbReference type="GO" id="GO:0090630">
    <property type="term" value="P:activation of GTPase activity"/>
    <property type="evidence" value="ECO:0000250"/>
    <property type="project" value="UniProtKB"/>
</dbReference>
<dbReference type="GO" id="GO:0060326">
    <property type="term" value="P:cell chemotaxis"/>
    <property type="evidence" value="ECO:0000250"/>
    <property type="project" value="UniProtKB"/>
</dbReference>
<dbReference type="GO" id="GO:0010761">
    <property type="term" value="P:fibroblast migration"/>
    <property type="evidence" value="ECO:0000315"/>
    <property type="project" value="MGI"/>
</dbReference>
<dbReference type="GO" id="GO:0048041">
    <property type="term" value="P:focal adhesion assembly"/>
    <property type="evidence" value="ECO:0000250"/>
    <property type="project" value="UniProtKB"/>
</dbReference>
<dbReference type="GO" id="GO:0006661">
    <property type="term" value="P:phosphatidylinositol biosynthetic process"/>
    <property type="evidence" value="ECO:0000316"/>
    <property type="project" value="MGI"/>
</dbReference>
<dbReference type="GO" id="GO:0046488">
    <property type="term" value="P:phosphatidylinositol metabolic process"/>
    <property type="evidence" value="ECO:0000314"/>
    <property type="project" value="MGI"/>
</dbReference>
<dbReference type="GO" id="GO:0072659">
    <property type="term" value="P:protein localization to plasma membrane"/>
    <property type="evidence" value="ECO:0000250"/>
    <property type="project" value="UniProtKB"/>
</dbReference>
<dbReference type="GO" id="GO:0097178">
    <property type="term" value="P:ruffle assembly"/>
    <property type="evidence" value="ECO:0000250"/>
    <property type="project" value="UniProtKB"/>
</dbReference>
<dbReference type="CDD" id="cd17306">
    <property type="entry name" value="PIPKc_PIP5K1A_like"/>
    <property type="match status" value="1"/>
</dbReference>
<dbReference type="FunFam" id="3.30.800.10:FF:000001">
    <property type="entry name" value="phosphatidylinositol 4-phosphate 5-kinase type-1 gamma"/>
    <property type="match status" value="1"/>
</dbReference>
<dbReference type="Gene3D" id="3.30.810.10">
    <property type="entry name" value="2-Layer Sandwich"/>
    <property type="match status" value="1"/>
</dbReference>
<dbReference type="Gene3D" id="3.30.800.10">
    <property type="entry name" value="Phosphatidylinositol Phosphate Kinase II Beta"/>
    <property type="match status" value="1"/>
</dbReference>
<dbReference type="InterPro" id="IPR027483">
    <property type="entry name" value="PInositol-4-P-4/5-kinase_C_sf"/>
</dbReference>
<dbReference type="InterPro" id="IPR002498">
    <property type="entry name" value="PInositol-4-P-4/5-kinase_core"/>
</dbReference>
<dbReference type="InterPro" id="IPR027484">
    <property type="entry name" value="PInositol-4-P-5-kinase_N"/>
</dbReference>
<dbReference type="InterPro" id="IPR023610">
    <property type="entry name" value="PInositol-4/5-P-5/4-kinase"/>
</dbReference>
<dbReference type="PANTHER" id="PTHR23086:SF54">
    <property type="entry name" value="PHOSPHATIDYLINOSITOL 4-PHOSPHATE 5-KINASE TYPE-1 ALPHA"/>
    <property type="match status" value="1"/>
</dbReference>
<dbReference type="PANTHER" id="PTHR23086">
    <property type="entry name" value="PHOSPHATIDYLINOSITOL-4-PHOSPHATE 5-KINASE"/>
    <property type="match status" value="1"/>
</dbReference>
<dbReference type="Pfam" id="PF01504">
    <property type="entry name" value="PIP5K"/>
    <property type="match status" value="1"/>
</dbReference>
<dbReference type="SMART" id="SM00330">
    <property type="entry name" value="PIPKc"/>
    <property type="match status" value="1"/>
</dbReference>
<dbReference type="SUPFAM" id="SSF56104">
    <property type="entry name" value="SAICAR synthase-like"/>
    <property type="match status" value="1"/>
</dbReference>
<dbReference type="PROSITE" id="PS51455">
    <property type="entry name" value="PIPK"/>
    <property type="match status" value="1"/>
</dbReference>
<reference key="1">
    <citation type="journal article" date="1996" name="J. Biol. Chem.">
        <title>Cloning of cDNAs encoding two isoforms of 68-kDa type I phosphatidylinositol 4-phosphate 5-kinase.</title>
        <authorList>
            <person name="Ishihara H."/>
            <person name="Shibasaki Y."/>
            <person name="Kizuki N."/>
            <person name="Katagiri H."/>
            <person name="Yazaki Y."/>
            <person name="Asano T."/>
            <person name="Oka Y."/>
        </authorList>
    </citation>
    <scope>NUCLEOTIDE SEQUENCE [MRNA] (ISOFORM 1)</scope>
    <scope>FUNCTION</scope>
    <scope>CATALYTIC ACTIVITY</scope>
    <scope>ACTIVITY REGULATION</scope>
    <scope>TISSUE SPECIFICITY</scope>
    <source>
        <tissue>Insulinoma</tissue>
    </source>
</reference>
<reference key="2">
    <citation type="journal article" date="2005" name="Science">
        <title>The transcriptional landscape of the mammalian genome.</title>
        <authorList>
            <person name="Carninci P."/>
            <person name="Kasukawa T."/>
            <person name="Katayama S."/>
            <person name="Gough J."/>
            <person name="Frith M.C."/>
            <person name="Maeda N."/>
            <person name="Oyama R."/>
            <person name="Ravasi T."/>
            <person name="Lenhard B."/>
            <person name="Wells C."/>
            <person name="Kodzius R."/>
            <person name="Shimokawa K."/>
            <person name="Bajic V.B."/>
            <person name="Brenner S.E."/>
            <person name="Batalov S."/>
            <person name="Forrest A.R."/>
            <person name="Zavolan M."/>
            <person name="Davis M.J."/>
            <person name="Wilming L.G."/>
            <person name="Aidinis V."/>
            <person name="Allen J.E."/>
            <person name="Ambesi-Impiombato A."/>
            <person name="Apweiler R."/>
            <person name="Aturaliya R.N."/>
            <person name="Bailey T.L."/>
            <person name="Bansal M."/>
            <person name="Baxter L."/>
            <person name="Beisel K.W."/>
            <person name="Bersano T."/>
            <person name="Bono H."/>
            <person name="Chalk A.M."/>
            <person name="Chiu K.P."/>
            <person name="Choudhary V."/>
            <person name="Christoffels A."/>
            <person name="Clutterbuck D.R."/>
            <person name="Crowe M.L."/>
            <person name="Dalla E."/>
            <person name="Dalrymple B.P."/>
            <person name="de Bono B."/>
            <person name="Della Gatta G."/>
            <person name="di Bernardo D."/>
            <person name="Down T."/>
            <person name="Engstrom P."/>
            <person name="Fagiolini M."/>
            <person name="Faulkner G."/>
            <person name="Fletcher C.F."/>
            <person name="Fukushima T."/>
            <person name="Furuno M."/>
            <person name="Futaki S."/>
            <person name="Gariboldi M."/>
            <person name="Georgii-Hemming P."/>
            <person name="Gingeras T.R."/>
            <person name="Gojobori T."/>
            <person name="Green R.E."/>
            <person name="Gustincich S."/>
            <person name="Harbers M."/>
            <person name="Hayashi Y."/>
            <person name="Hensch T.K."/>
            <person name="Hirokawa N."/>
            <person name="Hill D."/>
            <person name="Huminiecki L."/>
            <person name="Iacono M."/>
            <person name="Ikeo K."/>
            <person name="Iwama A."/>
            <person name="Ishikawa T."/>
            <person name="Jakt M."/>
            <person name="Kanapin A."/>
            <person name="Katoh M."/>
            <person name="Kawasawa Y."/>
            <person name="Kelso J."/>
            <person name="Kitamura H."/>
            <person name="Kitano H."/>
            <person name="Kollias G."/>
            <person name="Krishnan S.P."/>
            <person name="Kruger A."/>
            <person name="Kummerfeld S.K."/>
            <person name="Kurochkin I.V."/>
            <person name="Lareau L.F."/>
            <person name="Lazarevic D."/>
            <person name="Lipovich L."/>
            <person name="Liu J."/>
            <person name="Liuni S."/>
            <person name="McWilliam S."/>
            <person name="Madan Babu M."/>
            <person name="Madera M."/>
            <person name="Marchionni L."/>
            <person name="Matsuda H."/>
            <person name="Matsuzawa S."/>
            <person name="Miki H."/>
            <person name="Mignone F."/>
            <person name="Miyake S."/>
            <person name="Morris K."/>
            <person name="Mottagui-Tabar S."/>
            <person name="Mulder N."/>
            <person name="Nakano N."/>
            <person name="Nakauchi H."/>
            <person name="Ng P."/>
            <person name="Nilsson R."/>
            <person name="Nishiguchi S."/>
            <person name="Nishikawa S."/>
            <person name="Nori F."/>
            <person name="Ohara O."/>
            <person name="Okazaki Y."/>
            <person name="Orlando V."/>
            <person name="Pang K.C."/>
            <person name="Pavan W.J."/>
            <person name="Pavesi G."/>
            <person name="Pesole G."/>
            <person name="Petrovsky N."/>
            <person name="Piazza S."/>
            <person name="Reed J."/>
            <person name="Reid J.F."/>
            <person name="Ring B.Z."/>
            <person name="Ringwald M."/>
            <person name="Rost B."/>
            <person name="Ruan Y."/>
            <person name="Salzberg S.L."/>
            <person name="Sandelin A."/>
            <person name="Schneider C."/>
            <person name="Schoenbach C."/>
            <person name="Sekiguchi K."/>
            <person name="Semple C.A."/>
            <person name="Seno S."/>
            <person name="Sessa L."/>
            <person name="Sheng Y."/>
            <person name="Shibata Y."/>
            <person name="Shimada H."/>
            <person name="Shimada K."/>
            <person name="Silva D."/>
            <person name="Sinclair B."/>
            <person name="Sperling S."/>
            <person name="Stupka E."/>
            <person name="Sugiura K."/>
            <person name="Sultana R."/>
            <person name="Takenaka Y."/>
            <person name="Taki K."/>
            <person name="Tammoja K."/>
            <person name="Tan S.L."/>
            <person name="Tang S."/>
            <person name="Taylor M.S."/>
            <person name="Tegner J."/>
            <person name="Teichmann S.A."/>
            <person name="Ueda H.R."/>
            <person name="van Nimwegen E."/>
            <person name="Verardo R."/>
            <person name="Wei C.L."/>
            <person name="Yagi K."/>
            <person name="Yamanishi H."/>
            <person name="Zabarovsky E."/>
            <person name="Zhu S."/>
            <person name="Zimmer A."/>
            <person name="Hide W."/>
            <person name="Bult C."/>
            <person name="Grimmond S.M."/>
            <person name="Teasdale R.D."/>
            <person name="Liu E.T."/>
            <person name="Brusic V."/>
            <person name="Quackenbush J."/>
            <person name="Wahlestedt C."/>
            <person name="Mattick J.S."/>
            <person name="Hume D.A."/>
            <person name="Kai C."/>
            <person name="Sasaki D."/>
            <person name="Tomaru Y."/>
            <person name="Fukuda S."/>
            <person name="Kanamori-Katayama M."/>
            <person name="Suzuki M."/>
            <person name="Aoki J."/>
            <person name="Arakawa T."/>
            <person name="Iida J."/>
            <person name="Imamura K."/>
            <person name="Itoh M."/>
            <person name="Kato T."/>
            <person name="Kawaji H."/>
            <person name="Kawagashira N."/>
            <person name="Kawashima T."/>
            <person name="Kojima M."/>
            <person name="Kondo S."/>
            <person name="Konno H."/>
            <person name="Nakano K."/>
            <person name="Ninomiya N."/>
            <person name="Nishio T."/>
            <person name="Okada M."/>
            <person name="Plessy C."/>
            <person name="Shibata K."/>
            <person name="Shiraki T."/>
            <person name="Suzuki S."/>
            <person name="Tagami M."/>
            <person name="Waki K."/>
            <person name="Watahiki A."/>
            <person name="Okamura-Oho Y."/>
            <person name="Suzuki H."/>
            <person name="Kawai J."/>
            <person name="Hayashizaki Y."/>
        </authorList>
    </citation>
    <scope>NUCLEOTIDE SEQUENCE [LARGE SCALE MRNA] (ISOFORMS 1 AND 3)</scope>
    <source>
        <strain>C57BL/6J</strain>
        <tissue>Inner ear</tissue>
        <tissue>Macrophage</tissue>
    </source>
</reference>
<reference key="3">
    <citation type="journal article" date="2009" name="PLoS Biol.">
        <title>Lineage-specific biology revealed by a finished genome assembly of the mouse.</title>
        <authorList>
            <person name="Church D.M."/>
            <person name="Goodstadt L."/>
            <person name="Hillier L.W."/>
            <person name="Zody M.C."/>
            <person name="Goldstein S."/>
            <person name="She X."/>
            <person name="Bult C.J."/>
            <person name="Agarwala R."/>
            <person name="Cherry J.L."/>
            <person name="DiCuccio M."/>
            <person name="Hlavina W."/>
            <person name="Kapustin Y."/>
            <person name="Meric P."/>
            <person name="Maglott D."/>
            <person name="Birtle Z."/>
            <person name="Marques A.C."/>
            <person name="Graves T."/>
            <person name="Zhou S."/>
            <person name="Teague B."/>
            <person name="Potamousis K."/>
            <person name="Churas C."/>
            <person name="Place M."/>
            <person name="Herschleb J."/>
            <person name="Runnheim R."/>
            <person name="Forrest D."/>
            <person name="Amos-Landgraf J."/>
            <person name="Schwartz D.C."/>
            <person name="Cheng Z."/>
            <person name="Lindblad-Toh K."/>
            <person name="Eichler E.E."/>
            <person name="Ponting C.P."/>
        </authorList>
    </citation>
    <scope>NUCLEOTIDE SEQUENCE [LARGE SCALE GENOMIC DNA]</scope>
    <source>
        <strain>C57BL/6J</strain>
    </source>
</reference>
<reference key="4">
    <citation type="journal article" date="2004" name="Genome Res.">
        <title>The status, quality, and expansion of the NIH full-length cDNA project: the Mammalian Gene Collection (MGC).</title>
        <authorList>
            <consortium name="The MGC Project Team"/>
        </authorList>
    </citation>
    <scope>NUCLEOTIDE SEQUENCE [LARGE SCALE MRNA] (ISOFORMS 1 AND 2)</scope>
    <source>
        <tissue>Eye</tissue>
        <tissue>Mammary tumor</tissue>
    </source>
</reference>
<reference key="5">
    <citation type="journal article" date="1998" name="J. Biol. Chem.">
        <title>Type I phosphatidylinositol-4-phosphate 5-kinases. Cloning of the third isoform and deletion/substitution analysis of members of this novel lipid kinase family.</title>
        <authorList>
            <person name="Ishihara H."/>
            <person name="Shibasaki Y."/>
            <person name="Kizuki N."/>
            <person name="Wada T."/>
            <person name="Yazaki Y."/>
            <person name="Asano T."/>
            <person name="Oka Y."/>
        </authorList>
    </citation>
    <scope>FUNCTION</scope>
    <scope>CATALYTIC ACTIVITY</scope>
    <scope>ACTIVITY REGULATION</scope>
    <scope>BIOPHYSICOCHEMICAL PROPERTIES</scope>
</reference>
<reference key="6">
    <citation type="journal article" date="2000" name="Curr. Biol.">
        <title>Type Ialpha phosphatidylinositol-4-phosphate 5-kinase mediates Rac-dependent actin assembly.</title>
        <authorList>
            <person name="Tolias K.F."/>
            <person name="Hartwig J.H."/>
            <person name="Ishihara H."/>
            <person name="Shibasaki Y."/>
            <person name="Cantley L.C."/>
            <person name="Carpenter C.L."/>
        </authorList>
    </citation>
    <scope>FUNCTION</scope>
    <scope>INTERACTION WITH RAC1</scope>
</reference>
<reference key="7">
    <citation type="journal article" date="2008" name="Proc. Natl. Acad. Sci. U.S.A.">
        <title>Loss of PIP5KIbeta demonstrates that PIP5KI isoform-specific PIP2 synthesis is required for IP3 formation.</title>
        <authorList>
            <person name="Wang Y."/>
            <person name="Chen X."/>
            <person name="Lian L."/>
            <person name="Tang T."/>
            <person name="Stalker T.J."/>
            <person name="Sasaki T."/>
            <person name="Kanaho Y."/>
            <person name="Brass L.F."/>
            <person name="Choi J.K."/>
            <person name="Hartwig J.H."/>
            <person name="Abrams C.S."/>
        </authorList>
    </citation>
    <scope>FUNCTION IN PLATELETS</scope>
    <scope>DISRUPTION PHENOTYPE</scope>
</reference>
<reference key="8">
    <citation type="journal article" date="2009" name="J. Cell Biol.">
        <title>Essential and unique roles of PIP5K-gamma and -alpha in Fcgamma receptor-mediated phagocytosis.</title>
        <authorList>
            <person name="Mao Y.S."/>
            <person name="Yamaga M."/>
            <person name="Zhu X."/>
            <person name="Wei Y."/>
            <person name="Sun H.-Q."/>
            <person name="Wang J."/>
            <person name="Yun M."/>
            <person name="Wang Y."/>
            <person name="Di Paolo G."/>
            <person name="Bennett M."/>
            <person name="Mellman I."/>
            <person name="Abrams C.S."/>
            <person name="De Camilli P."/>
            <person name="Lu C.Y."/>
            <person name="Yin H.L."/>
        </authorList>
    </citation>
    <scope>FUNCTION IN PHAGOCYTOSIS</scope>
    <scope>DISRUPTION PHENOTYPE</scope>
</reference>
<reference key="9">
    <citation type="journal article" date="2010" name="Cell">
        <title>A tissue-specific atlas of mouse protein phosphorylation and expression.</title>
        <authorList>
            <person name="Huttlin E.L."/>
            <person name="Jedrychowski M.P."/>
            <person name="Elias J.E."/>
            <person name="Goswami T."/>
            <person name="Rad R."/>
            <person name="Beausoleil S.A."/>
            <person name="Villen J."/>
            <person name="Haas W."/>
            <person name="Sowa M.E."/>
            <person name="Gygi S.P."/>
        </authorList>
    </citation>
    <scope>IDENTIFICATION BY MASS SPECTROMETRY [LARGE SCALE ANALYSIS]</scope>
    <source>
        <tissue>Spleen</tissue>
    </source>
</reference>
<reference key="10">
    <citation type="journal article" date="2010" name="J. Biol. Chem.">
        <title>Phosphatidylinositol-4-phosphate 5-kinases and phosphatidylinositol 4,5-bisphosphate synthesis in the brain.</title>
        <authorList>
            <person name="Volpicelli-Daley L.A."/>
            <person name="Lucast L."/>
            <person name="Gong L.-W."/>
            <person name="Liu L."/>
            <person name="Sasaki J."/>
            <person name="Sasaki T."/>
            <person name="Abrams C.S."/>
            <person name="Kanaho Y."/>
            <person name="De Camilli P."/>
        </authorList>
    </citation>
    <scope>FUNCTION IN EMBRYOGENESIS</scope>
    <scope>SUBCELLULAR LOCATION</scope>
    <scope>TISSUE SPECIFICITY</scope>
    <scope>DEVELOPMENTAL STAGE</scope>
    <scope>DISRUPTION PHENOTYPE</scope>
</reference>
<reference key="11">
    <citation type="journal article" date="2016" name="Sci. Rep.">
        <title>A novel IRS-1-associated protein, DGKzeta regulates GLUT4 translocation in 3T3-L1 adipocytes.</title>
        <authorList>
            <person name="Liu T."/>
            <person name="Yu B."/>
            <person name="Kakino M."/>
            <person name="Fujimoto H."/>
            <person name="Ando Y."/>
            <person name="Hakuno F."/>
            <person name="Takahashi S.I."/>
        </authorList>
    </citation>
    <scope>FUNCTION</scope>
    <scope>IDENTIFICATION IN A COMPLEX WITH DGKZ AND IRS1</scope>
</reference>
<protein>
    <recommendedName>
        <fullName evidence="16 17">Phosphatidylinositol 4-phosphate 5-kinase type-1 alpha</fullName>
        <shortName evidence="16 17">PIP5K1-alpha</shortName>
        <shortName evidence="16 17">PtdIns(4)P-5-kinase 1 alpha</shortName>
        <ecNumber evidence="10">2.7.1.68</ecNumber>
    </recommendedName>
    <alternativeName>
        <fullName evidence="14">68 kDa type I phosphatidylinositol 4-phosphate 5-kinase alpha</fullName>
    </alternativeName>
    <alternativeName>
        <fullName evidence="16 17">Phosphatidylinositol 4-phosphate 5-kinase type I alpha</fullName>
        <shortName evidence="13 17">PIP5KIalpha</shortName>
    </alternativeName>
    <alternativeName>
        <fullName evidence="19 20 21 22">Phosphatidylinositol 4-phosphate 5-kinase type I beta</fullName>
        <shortName>PI4P5KIbeta</shortName>
    </alternativeName>
</protein>
<comment type="function">
    <text evidence="1 4 5 6 7 8 9 10 13">Catalyzes the phosphorylation of phosphatidylinositol 4-phosphate (PtdIns(4)P/PI4P) to form phosphatidylinositol 4,5-bisphosphate (PtdIns(4,5)P2/PIP2), a lipid second messenger that regulates several cellular processes such as signal transduction, vesicle trafficking, actin cytoskeleton dynamics, cell adhesion, and cell motility (PubMed:8798574, PubMed:9535851). PtdIns(4,5)P2 can directly act as a second messenger or can be utilized as a precursor to generate other second messengers: inositol 1,4,5-trisphosphate (IP3), diacylglycerol (DAG) or phosphatidylinositol-3,4,5-trisphosphate (PtdIns(3,4,5)P3/PIP3) (By similarity). PIP5K1A-mediated phosphorylation of PtdIns(4)P is the predominant pathway for PtdIns(4,5)P2 synthesis (PubMed:18772378). Can also use phosphatidylinositol (PtdIns) as substrate in vitro (By similarity). Together with PIP5K1C, is required for phagocytosis, both enzymes regulating different types of actin remodeling at sequential steps (PubMed:19153220). Promotes particle ingestion by activating the WAS GTPase-binding protein that induces Arp2/3 dependent actin polymerization at the nascent phagocytic cup (PubMed:19153220). Together with PIP5K1B, is required, after stimulation by G-protein coupled receptors, for the synthesis of IP3 that will induce stable platelet adhesion (PubMed:18772378). Recruited to the plasma membrane by the E-cadherin/beta-catenin complex where it provides the substrate PtdIns(4,5)P2 for the production of PtdIns(3,4,5)P3, IP3 and DAG, that will mobilize internal calcium and drive keratinocyte differentiation (By similarity). Positively regulates insulin-induced translocation of SLC2A4 to the cell membrane in adipocytes (PubMed:27739494). Together with PIP5K1C has a role during embryogenesis (PubMed:20622009). Independently of its catalytic activity, is required for membrane ruffling formation, actin organization and focal adhesion formation during directional cell migration by controlling integrin-induced translocation of the small GTPase RAC1 to the plasma membrane (PubMed:10679324). Also functions in the nucleus where it acts as an activator of TUT1 adenylyltransferase activity in nuclear speckles, thereby regulating mRNA polyadenylation of a select set of mRNAs (By similarity).</text>
</comment>
<comment type="catalytic activity">
    <reaction evidence="9 10">
        <text>a 1,2-diacyl-sn-glycero-3-phospho-(1D-myo-inositol 4-phosphate) + ATP = a 1,2-diacyl-sn-glycero-3-phospho-(1D-myo-inositol-4,5-bisphosphate) + ADP + H(+)</text>
        <dbReference type="Rhea" id="RHEA:14425"/>
        <dbReference type="ChEBI" id="CHEBI:15378"/>
        <dbReference type="ChEBI" id="CHEBI:30616"/>
        <dbReference type="ChEBI" id="CHEBI:58178"/>
        <dbReference type="ChEBI" id="CHEBI:58456"/>
        <dbReference type="ChEBI" id="CHEBI:456216"/>
        <dbReference type="EC" id="2.7.1.68"/>
    </reaction>
    <physiologicalReaction direction="left-to-right" evidence="17 18">
        <dbReference type="Rhea" id="RHEA:14426"/>
    </physiologicalReaction>
</comment>
<comment type="catalytic activity">
    <reaction evidence="1">
        <text>1-octadecanoyl-2-(5Z,8Z,11Z,14Z)-eicosatetraenoyl-sn-glycero-3-phospho-1D-myo-inositol 4-phosphate + ATP = 1-octadecanoyl-2-(5Z,8Z,11Z,14Z)-eicosatetraenoyl-sn-glycero-3-phospho-1D-myo-inositol 4,5-bisphosphate + ADP + H(+)</text>
        <dbReference type="Rhea" id="RHEA:40363"/>
        <dbReference type="ChEBI" id="CHEBI:15378"/>
        <dbReference type="ChEBI" id="CHEBI:30616"/>
        <dbReference type="ChEBI" id="CHEBI:77136"/>
        <dbReference type="ChEBI" id="CHEBI:77137"/>
        <dbReference type="ChEBI" id="CHEBI:456216"/>
    </reaction>
    <physiologicalReaction direction="left-to-right" evidence="1">
        <dbReference type="Rhea" id="RHEA:40364"/>
    </physiologicalReaction>
</comment>
<comment type="catalytic activity">
    <reaction evidence="1">
        <text>1,2-dihexadecanoyl-sn-glycero-3-phospho-(1D-myo-inositol-4-phosphate) + ATP = 1,2-dihexadecanoyl-sn-glycero-3-phospho-(1D-myo-inositol-4,5-bisphosphate) + ADP + H(+)</text>
        <dbReference type="Rhea" id="RHEA:65356"/>
        <dbReference type="ChEBI" id="CHEBI:15378"/>
        <dbReference type="ChEBI" id="CHEBI:30616"/>
        <dbReference type="ChEBI" id="CHEBI:83423"/>
        <dbReference type="ChEBI" id="CHEBI:83436"/>
        <dbReference type="ChEBI" id="CHEBI:456216"/>
    </reaction>
    <physiologicalReaction direction="left-to-right" evidence="1">
        <dbReference type="Rhea" id="RHEA:65357"/>
    </physiologicalReaction>
</comment>
<comment type="catalytic activity">
    <reaction evidence="1">
        <text>1-octadecanoyl-2-(9Z)-octadecenoyl-sn-glycero-3-phospho-1D-myo-inositol 4-phosphate + ATP = 1-octadecanoyl-2-(9Z)-octadecenoyl-sn-glycero-3-phospho-1D-myo-inositol 4,5-bisphosphate + ADP + H(+)</text>
        <dbReference type="Rhea" id="RHEA:40367"/>
        <dbReference type="ChEBI" id="CHEBI:15378"/>
        <dbReference type="ChEBI" id="CHEBI:30616"/>
        <dbReference type="ChEBI" id="CHEBI:77139"/>
        <dbReference type="ChEBI" id="CHEBI:77140"/>
        <dbReference type="ChEBI" id="CHEBI:456216"/>
    </reaction>
    <physiologicalReaction direction="left-to-right" evidence="1">
        <dbReference type="Rhea" id="RHEA:40368"/>
    </physiologicalReaction>
</comment>
<comment type="catalytic activity">
    <reaction evidence="1">
        <text>1-octadecanoyl-2-(9Z)-octadecenoyl-sn-glycero-3-phospho-1D-myo-inositol + ATP = 1-octadecanoyl-2-(9Z)-octadecenoyl-sn-glycero-3-phospho-1D-myo-inositol 5-phosphate + ADP + H(+)</text>
        <dbReference type="Rhea" id="RHEA:40379"/>
        <dbReference type="ChEBI" id="CHEBI:15378"/>
        <dbReference type="ChEBI" id="CHEBI:30616"/>
        <dbReference type="ChEBI" id="CHEBI:77163"/>
        <dbReference type="ChEBI" id="CHEBI:77164"/>
        <dbReference type="ChEBI" id="CHEBI:456216"/>
    </reaction>
    <physiologicalReaction direction="left-to-right" evidence="1">
        <dbReference type="Rhea" id="RHEA:40380"/>
    </physiologicalReaction>
</comment>
<comment type="catalytic activity">
    <reaction evidence="1">
        <text>1-octadecanoyl-2-(9Z,12Z)-octadecadienoyl-sn-glycero-3-phospho-1D-myo-inositol + ATP = 1-octadecanoyl-2-(9Z,12Z)-octadecadienoyl-sn-glycero-3-phospho-1D-myo-inositol 5-phosphate + ADP + H(+)</text>
        <dbReference type="Rhea" id="RHEA:40383"/>
        <dbReference type="ChEBI" id="CHEBI:15378"/>
        <dbReference type="ChEBI" id="CHEBI:30616"/>
        <dbReference type="ChEBI" id="CHEBI:77158"/>
        <dbReference type="ChEBI" id="CHEBI:77159"/>
        <dbReference type="ChEBI" id="CHEBI:456216"/>
    </reaction>
    <physiologicalReaction direction="left-to-right" evidence="1">
        <dbReference type="Rhea" id="RHEA:40384"/>
    </physiologicalReaction>
</comment>
<comment type="catalytic activity">
    <reaction evidence="1">
        <text>1-octadecanoyl-2-(5Z,8Z,11Z,14Z-eicosatetraenoyl)-sn-glycero-3-phospho-(1D-myo-inositol) + ATP = 1-octadecanoyl-2-(5Z,8Z,11Z,14Z)-eicosatetraenoyl-sn-glycero-3-phospho-1D-myo-inositol 5-phosphate + ADP + H(+)</text>
        <dbReference type="Rhea" id="RHEA:40375"/>
        <dbReference type="ChEBI" id="CHEBI:15378"/>
        <dbReference type="ChEBI" id="CHEBI:30616"/>
        <dbReference type="ChEBI" id="CHEBI:77160"/>
        <dbReference type="ChEBI" id="CHEBI:133606"/>
        <dbReference type="ChEBI" id="CHEBI:456216"/>
    </reaction>
    <physiologicalReaction direction="left-to-right" evidence="1">
        <dbReference type="Rhea" id="RHEA:40376"/>
    </physiologicalReaction>
</comment>
<comment type="catalytic activity">
    <reaction evidence="1">
        <text>1,2-di-(9Z,12Z)-octadecadienoyl-sn-glycero-3-phospho-1D-myo-inositol + ATP = 1,2-di(9Z,12Z)-octadecadienoyl-sn-glycero-3-phospho-1D-myo-inositol 5-phosphate + ADP + H(+)</text>
        <dbReference type="Rhea" id="RHEA:40387"/>
        <dbReference type="ChEBI" id="CHEBI:15378"/>
        <dbReference type="ChEBI" id="CHEBI:30616"/>
        <dbReference type="ChEBI" id="CHEBI:77165"/>
        <dbReference type="ChEBI" id="CHEBI:77167"/>
        <dbReference type="ChEBI" id="CHEBI:456216"/>
    </reaction>
    <physiologicalReaction direction="left-to-right" evidence="1">
        <dbReference type="Rhea" id="RHEA:40388"/>
    </physiologicalReaction>
</comment>
<comment type="activity regulation">
    <text evidence="9 10">Activated by phosphatidic acid.</text>
</comment>
<comment type="biophysicochemical properties">
    <kinetics>
        <KM evidence="10">26 uM for phosphatidylinositol-4-phosphate/PtdIns(4)P</KM>
        <KM evidence="10">33 uM for ATP</KM>
    </kinetics>
</comment>
<comment type="subunit">
    <text evidence="1 4 8">Interacts with RAC1 (PubMed:10679324). Interacts with TUT1 (By similarity). Forms a complex with CDH1/E-cadherin, CTNNB1/beta-catenin and CTNND1 at the plasma membrane upon calcium stimulation (By similarity). Found in a ternary complex with IRS1 and DGKZ in the absence of insulin stimulation (PubMed:27739494). Interacts with DGKZ (By similarity). Interacts with PIP4K2C; the interaction inhibits PIP5K1A kinase activity (By similarity).</text>
</comment>
<comment type="subcellular location">
    <subcellularLocation>
        <location evidence="7">Cell membrane</location>
    </subcellularLocation>
    <subcellularLocation>
        <location evidence="7">Cytoplasm</location>
    </subcellularLocation>
    <subcellularLocation>
        <location evidence="1">Nucleus</location>
    </subcellularLocation>
    <subcellularLocation>
        <location evidence="1">Nucleus speckle</location>
    </subcellularLocation>
    <subcellularLocation>
        <location evidence="1">Cell projection</location>
        <location evidence="1">Ruffle</location>
    </subcellularLocation>
    <subcellularLocation>
        <location evidence="1">Cell projection</location>
        <location evidence="1">Lamellipodium</location>
    </subcellularLocation>
    <text evidence="1">Colocalizes with RAC1 at actin-rich membrane ruffles (By similarity). Localizes to nuclear speckles and associates with TUT1 to regulate polyadenylation of selected mRNAs (By similarity).</text>
</comment>
<comment type="alternative products">
    <event type="alternative splicing"/>
    <isoform>
        <id>P70182-1</id>
        <name>1</name>
        <sequence type="displayed"/>
    </isoform>
    <isoform>
        <id>P70182-2</id>
        <name>2</name>
        <sequence type="described" ref="VSP_053437 VSP_016009"/>
    </isoform>
    <isoform>
        <id>P70182-3</id>
        <name>3</name>
        <sequence type="described" ref="VSP_053437"/>
    </isoform>
</comment>
<comment type="tissue specificity">
    <text evidence="7 9">Highest expression in brain. Also detected in skeletal muscle, testis, brain and lung.</text>
</comment>
<comment type="developmental stage">
    <text evidence="7">Expression is highest during early embryogenesis and slightly decreases over time.</text>
</comment>
<comment type="disruption phenotype">
    <text evidence="5 6 7">Survive to adulthood, but bred poorly and display reduced fertility. Failed to form any vessel occlusion after chemical-induced carotid injury. Platelets have defective aggregation. Bone marrow-derived macrophages are defective in actin polymerization during phagocytosis. PIP5K1A and PIP5K1C double mutant mice are embryonic lethal.</text>
</comment>
<comment type="caution">
    <text evidence="15">There is confusion in the literature with phosphatidylinositol 4-phosphate 5-kinase type I nomenclature due to the fact that frequently mouse PIP5K1B is named Phosphatidylinositol 4-phosphate 5-kinase type I alpha.</text>
</comment>
<evidence type="ECO:0000250" key="1">
    <source>
        <dbReference type="UniProtKB" id="Q99755"/>
    </source>
</evidence>
<evidence type="ECO:0000255" key="2">
    <source>
        <dbReference type="PROSITE-ProRule" id="PRU00781"/>
    </source>
</evidence>
<evidence type="ECO:0000256" key="3">
    <source>
        <dbReference type="SAM" id="MobiDB-lite"/>
    </source>
</evidence>
<evidence type="ECO:0000269" key="4">
    <source>
    </source>
</evidence>
<evidence type="ECO:0000269" key="5">
    <source>
    </source>
</evidence>
<evidence type="ECO:0000269" key="6">
    <source>
    </source>
</evidence>
<evidence type="ECO:0000269" key="7">
    <source>
    </source>
</evidence>
<evidence type="ECO:0000269" key="8">
    <source>
    </source>
</evidence>
<evidence type="ECO:0000269" key="9">
    <source>
    </source>
</evidence>
<evidence type="ECO:0000269" key="10">
    <source>
    </source>
</evidence>
<evidence type="ECO:0000303" key="11">
    <source>
    </source>
</evidence>
<evidence type="ECO:0000303" key="12">
    <source>
    </source>
</evidence>
<evidence type="ECO:0000303" key="13">
    <source>
    </source>
</evidence>
<evidence type="ECO:0000303" key="14">
    <source>
    </source>
</evidence>
<evidence type="ECO:0000305" key="15"/>
<evidence type="ECO:0000305" key="16">
    <source>
    </source>
</evidence>
<evidence type="ECO:0000305" key="17">
    <source>
    </source>
</evidence>
<evidence type="ECO:0000305" key="18">
    <source>
    </source>
</evidence>
<evidence type="ECO:0000312" key="19">
    <source>
        <dbReference type="EMBL" id="BAA13031.1"/>
    </source>
</evidence>
<evidence type="ECO:0000312" key="20">
    <source>
        <dbReference type="EMBL" id="BAE29943.1"/>
    </source>
</evidence>
<evidence type="ECO:0000312" key="21">
    <source>
        <dbReference type="EMBL" id="BAE30850.1"/>
    </source>
</evidence>
<evidence type="ECO:0000312" key="22">
    <source>
        <dbReference type="EMBL" id="BAE34344.1"/>
    </source>
</evidence>
<evidence type="ECO:0000312" key="23">
    <source>
        <dbReference type="MGI" id="MGI:107929"/>
    </source>
</evidence>
<organism>
    <name type="scientific">Mus musculus</name>
    <name type="common">Mouse</name>
    <dbReference type="NCBI Taxonomy" id="10090"/>
    <lineage>
        <taxon>Eukaryota</taxon>
        <taxon>Metazoa</taxon>
        <taxon>Chordata</taxon>
        <taxon>Craniata</taxon>
        <taxon>Vertebrata</taxon>
        <taxon>Euteleostomi</taxon>
        <taxon>Mammalia</taxon>
        <taxon>Eutheria</taxon>
        <taxon>Euarchontoglires</taxon>
        <taxon>Glires</taxon>
        <taxon>Rodentia</taxon>
        <taxon>Myomorpha</taxon>
        <taxon>Muroidea</taxon>
        <taxon>Muridae</taxon>
        <taxon>Murinae</taxon>
        <taxon>Mus</taxon>
        <taxon>Mus</taxon>
    </lineage>
</organism>
<accession>P70182</accession>
<accession>F8WIX5</accession>
<accession>Q3U917</accession>
<accession>Q8K0D3</accession>
<accession>Q99L80</accession>
<keyword id="KW-0025">Alternative splicing</keyword>
<keyword id="KW-0067">ATP-binding</keyword>
<keyword id="KW-1003">Cell membrane</keyword>
<keyword id="KW-0966">Cell projection</keyword>
<keyword id="KW-0963">Cytoplasm</keyword>
<keyword id="KW-1017">Isopeptide bond</keyword>
<keyword id="KW-0418">Kinase</keyword>
<keyword id="KW-0443">Lipid metabolism</keyword>
<keyword id="KW-0472">Membrane</keyword>
<keyword id="KW-0547">Nucleotide-binding</keyword>
<keyword id="KW-0539">Nucleus</keyword>
<keyword id="KW-1185">Reference proteome</keyword>
<keyword id="KW-0808">Transferase</keyword>
<keyword id="KW-0832">Ubl conjugation</keyword>
<proteinExistence type="evidence at protein level"/>
<gene>
    <name evidence="23" type="primary">Pip5k1a</name>
</gene>